<proteinExistence type="evidence at protein level"/>
<feature type="chain" id="PRO_0000421240" description="Flagellar motor switch protein FliM">
    <location>
        <begin position="1"/>
        <end position="328"/>
    </location>
</feature>
<feature type="region of interest" description="Interaction with unphosphorylated CheY" evidence="4">
    <location>
        <begin position="1"/>
        <end position="45"/>
    </location>
</feature>
<feature type="mutagenesis site" description="No appreciable effect on the binding affinity for CheY." evidence="4">
    <original>E</original>
    <variation>C</variation>
    <location>
        <position position="60"/>
    </location>
</feature>
<feature type="helix" evidence="14">
    <location>
        <begin position="7"/>
        <end position="16"/>
    </location>
</feature>
<feature type="helix" evidence="13">
    <location>
        <begin position="49"/>
        <end position="73"/>
    </location>
</feature>
<feature type="strand" evidence="13">
    <location>
        <begin position="79"/>
        <end position="88"/>
    </location>
</feature>
<feature type="helix" evidence="13">
    <location>
        <begin position="89"/>
        <end position="95"/>
    </location>
</feature>
<feature type="strand" evidence="13">
    <location>
        <begin position="101"/>
        <end position="107"/>
    </location>
</feature>
<feature type="strand" evidence="13">
    <location>
        <begin position="114"/>
        <end position="118"/>
    </location>
</feature>
<feature type="helix" evidence="13">
    <location>
        <begin position="120"/>
        <end position="130"/>
    </location>
</feature>
<feature type="helix" evidence="13">
    <location>
        <begin position="145"/>
        <end position="165"/>
    </location>
</feature>
<feature type="turn" evidence="13">
    <location>
        <begin position="166"/>
        <end position="169"/>
    </location>
</feature>
<feature type="strand" evidence="13">
    <location>
        <begin position="174"/>
        <end position="181"/>
    </location>
</feature>
<feature type="helix" evidence="13">
    <location>
        <begin position="183"/>
        <end position="185"/>
    </location>
</feature>
<feature type="strand" evidence="13">
    <location>
        <begin position="193"/>
        <end position="204"/>
    </location>
</feature>
<feature type="strand" evidence="13">
    <location>
        <begin position="207"/>
        <end position="216"/>
    </location>
</feature>
<feature type="helix" evidence="13">
    <location>
        <begin position="217"/>
        <end position="220"/>
    </location>
</feature>
<feature type="helix" evidence="13">
    <location>
        <begin position="221"/>
        <end position="223"/>
    </location>
</feature>
<feature type="turn" evidence="12">
    <location>
        <begin position="228"/>
        <end position="232"/>
    </location>
</feature>
<keyword id="KW-0002">3D-structure</keyword>
<keyword id="KW-0975">Bacterial flagellum</keyword>
<keyword id="KW-0997">Cell inner membrane</keyword>
<keyword id="KW-1003">Cell membrane</keyword>
<keyword id="KW-0145">Chemotaxis</keyword>
<keyword id="KW-0283">Flagellar rotation</keyword>
<keyword id="KW-0472">Membrane</keyword>
<keyword id="KW-1185">Reference proteome</keyword>
<name>FLIM_THEMA</name>
<organism>
    <name type="scientific">Thermotoga maritima (strain ATCC 43589 / DSM 3109 / JCM 10099 / NBRC 100826 / MSB8)</name>
    <dbReference type="NCBI Taxonomy" id="243274"/>
    <lineage>
        <taxon>Bacteria</taxon>
        <taxon>Thermotogati</taxon>
        <taxon>Thermotogota</taxon>
        <taxon>Thermotogae</taxon>
        <taxon>Thermotogales</taxon>
        <taxon>Thermotogaceae</taxon>
        <taxon>Thermotoga</taxon>
    </lineage>
</organism>
<accession>Q9WZE6</accession>
<accession>G4FDE5</accession>
<dbReference type="EMBL" id="AE000512">
    <property type="protein sequence ID" value="AAD35762.1"/>
    <property type="molecule type" value="Genomic_DNA"/>
</dbReference>
<dbReference type="PIR" id="E72347">
    <property type="entry name" value="E72347"/>
</dbReference>
<dbReference type="RefSeq" id="NP_228487.1">
    <property type="nucleotide sequence ID" value="NC_000853.1"/>
</dbReference>
<dbReference type="RefSeq" id="WP_004081085.1">
    <property type="nucleotide sequence ID" value="NC_000853.1"/>
</dbReference>
<dbReference type="PDB" id="2HP7">
    <property type="method" value="X-ray"/>
    <property type="resolution" value="2.00 A"/>
    <property type="chains" value="A=44-226"/>
</dbReference>
<dbReference type="PDB" id="3SOH">
    <property type="method" value="X-ray"/>
    <property type="resolution" value="3.50 A"/>
    <property type="chains" value="A/C=46-233"/>
</dbReference>
<dbReference type="PDB" id="4FHR">
    <property type="method" value="X-ray"/>
    <property type="resolution" value="1.93 A"/>
    <property type="chains" value="A=46-230"/>
</dbReference>
<dbReference type="PDB" id="4IGA">
    <property type="method" value="X-ray"/>
    <property type="resolution" value="1.73 A"/>
    <property type="chains" value="B=1-20"/>
</dbReference>
<dbReference type="PDB" id="4QRM">
    <property type="method" value="X-ray"/>
    <property type="resolution" value="4.32 A"/>
    <property type="chains" value="A/C/E/G/I/K/M/O/Q/S/U=46-228"/>
</dbReference>
<dbReference type="PDBsum" id="2HP7"/>
<dbReference type="PDBsum" id="3SOH"/>
<dbReference type="PDBsum" id="4FHR"/>
<dbReference type="PDBsum" id="4IGA"/>
<dbReference type="PDBsum" id="4QRM"/>
<dbReference type="SMR" id="Q9WZE6"/>
<dbReference type="DIP" id="DIP-61248N"/>
<dbReference type="FunCoup" id="Q9WZE6">
    <property type="interactions" value="78"/>
</dbReference>
<dbReference type="IntAct" id="Q9WZE6">
    <property type="interactions" value="2"/>
</dbReference>
<dbReference type="MINT" id="Q9WZE6"/>
<dbReference type="STRING" id="243274.TM_0679"/>
<dbReference type="PaxDb" id="243274-THEMA_01270"/>
<dbReference type="EnsemblBacteria" id="AAD35762">
    <property type="protein sequence ID" value="AAD35762"/>
    <property type="gene ID" value="TM_0679"/>
</dbReference>
<dbReference type="KEGG" id="tma:TM0679"/>
<dbReference type="KEGG" id="tmi:THEMA_01270"/>
<dbReference type="KEGG" id="tmm:Tmari_0679"/>
<dbReference type="KEGG" id="tmw:THMA_0694"/>
<dbReference type="eggNOG" id="COG1868">
    <property type="taxonomic scope" value="Bacteria"/>
</dbReference>
<dbReference type="InParanoid" id="Q9WZE6"/>
<dbReference type="OrthoDB" id="9806941at2"/>
<dbReference type="EvolutionaryTrace" id="Q9WZE6"/>
<dbReference type="Proteomes" id="UP000008183">
    <property type="component" value="Chromosome"/>
</dbReference>
<dbReference type="GO" id="GO:0009425">
    <property type="term" value="C:bacterial-type flagellum basal body"/>
    <property type="evidence" value="ECO:0007669"/>
    <property type="project" value="UniProtKB-SubCell"/>
</dbReference>
<dbReference type="GO" id="GO:0005886">
    <property type="term" value="C:plasma membrane"/>
    <property type="evidence" value="ECO:0007669"/>
    <property type="project" value="UniProtKB-SubCell"/>
</dbReference>
<dbReference type="GO" id="GO:0003774">
    <property type="term" value="F:cytoskeletal motor activity"/>
    <property type="evidence" value="ECO:0007669"/>
    <property type="project" value="InterPro"/>
</dbReference>
<dbReference type="GO" id="GO:0071978">
    <property type="term" value="P:bacterial-type flagellum-dependent swarming motility"/>
    <property type="evidence" value="ECO:0000318"/>
    <property type="project" value="GO_Central"/>
</dbReference>
<dbReference type="GO" id="GO:0050918">
    <property type="term" value="P:positive chemotaxis"/>
    <property type="evidence" value="ECO:0000318"/>
    <property type="project" value="GO_Central"/>
</dbReference>
<dbReference type="CDD" id="cd17908">
    <property type="entry name" value="FliM"/>
    <property type="match status" value="1"/>
</dbReference>
<dbReference type="Gene3D" id="3.40.1550.10">
    <property type="entry name" value="CheC-like"/>
    <property type="match status" value="1"/>
</dbReference>
<dbReference type="Gene3D" id="2.30.330.10">
    <property type="entry name" value="SpoA-like"/>
    <property type="match status" value="1"/>
</dbReference>
<dbReference type="InterPro" id="IPR028976">
    <property type="entry name" value="CheC-like_sf"/>
</dbReference>
<dbReference type="InterPro" id="IPR001689">
    <property type="entry name" value="Flag_FliM"/>
</dbReference>
<dbReference type="InterPro" id="IPR001543">
    <property type="entry name" value="FliN-like_C"/>
</dbReference>
<dbReference type="InterPro" id="IPR036429">
    <property type="entry name" value="SpoA-like_sf"/>
</dbReference>
<dbReference type="NCBIfam" id="TIGR01397">
    <property type="entry name" value="fliM_switch"/>
    <property type="match status" value="1"/>
</dbReference>
<dbReference type="PANTHER" id="PTHR30034">
    <property type="entry name" value="FLAGELLAR MOTOR SWITCH PROTEIN FLIM"/>
    <property type="match status" value="1"/>
</dbReference>
<dbReference type="PANTHER" id="PTHR30034:SF6">
    <property type="entry name" value="YOP PROTEINS TRANSLOCATION PROTEIN Q"/>
    <property type="match status" value="1"/>
</dbReference>
<dbReference type="Pfam" id="PF02154">
    <property type="entry name" value="FliM"/>
    <property type="match status" value="1"/>
</dbReference>
<dbReference type="Pfam" id="PF01052">
    <property type="entry name" value="FliMN_C"/>
    <property type="match status" value="1"/>
</dbReference>
<dbReference type="PIRSF" id="PIRSF002888">
    <property type="entry name" value="FliM"/>
    <property type="match status" value="1"/>
</dbReference>
<dbReference type="PRINTS" id="PR00955">
    <property type="entry name" value="FLGMOTORFLIM"/>
</dbReference>
<dbReference type="SUPFAM" id="SSF103039">
    <property type="entry name" value="CheC-like"/>
    <property type="match status" value="1"/>
</dbReference>
<dbReference type="SUPFAM" id="SSF101801">
    <property type="entry name" value="Surface presentation of antigens (SPOA)"/>
    <property type="match status" value="1"/>
</dbReference>
<comment type="function">
    <text evidence="1">FliM is one of three proteins (FliG, FliN, FliM) that forms the rotor-mounted switch complex (C ring), located at the base of the basal body. This complex interacts with the CheY and CheX chemotaxis proteins, in addition to contacting components of the motor that determine the direction of flagellar rotation (By similarity).</text>
</comment>
<comment type="subunit">
    <text evidence="4 5 6">Interacts (via N-terminus) with unphosphorylated CheY. Interacts (via central domain) with FliG (via central domain or via central domain and C-terminus).</text>
</comment>
<comment type="interaction">
    <interactant intactId="EBI-6981685">
        <id>Q9WZE6</id>
    </interactant>
    <interactant intactId="EBI-1039694">
        <id>Q56312</id>
        <label>cheY</label>
    </interactant>
    <organismsDiffer>false</organismsDiffer>
    <experiments>2</experiments>
</comment>
<comment type="subcellular location">
    <subcellularLocation>
        <location evidence="1">Cell inner membrane</location>
        <topology evidence="1">Peripheral membrane protein</topology>
    </subcellularLocation>
    <subcellularLocation>
        <location evidence="2">Bacterial flagellum basal body</location>
    </subcellularLocation>
</comment>
<comment type="similarity">
    <text evidence="3">Belongs to the FliM family.</text>
</comment>
<gene>
    <name evidence="2" type="primary">fliM</name>
    <name type="ordered locus">TM_0679</name>
</gene>
<reference evidence="8" key="1">
    <citation type="journal article" date="1999" name="Nature">
        <title>Evidence for lateral gene transfer between Archaea and Bacteria from genome sequence of Thermotoga maritima.</title>
        <authorList>
            <person name="Nelson K.E."/>
            <person name="Clayton R.A."/>
            <person name="Gill S.R."/>
            <person name="Gwinn M.L."/>
            <person name="Dodson R.J."/>
            <person name="Haft D.H."/>
            <person name="Hickey E.K."/>
            <person name="Peterson J.D."/>
            <person name="Nelson W.C."/>
            <person name="Ketchum K.A."/>
            <person name="McDonald L.A."/>
            <person name="Utterback T.R."/>
            <person name="Malek J.A."/>
            <person name="Linher K.D."/>
            <person name="Garrett M.M."/>
            <person name="Stewart A.M."/>
            <person name="Cotton M.D."/>
            <person name="Pratt M.S."/>
            <person name="Phillips C.A."/>
            <person name="Richardson D.L."/>
            <person name="Heidelberg J.F."/>
            <person name="Sutton G.G."/>
            <person name="Fleischmann R.D."/>
            <person name="Eisen J.A."/>
            <person name="White O."/>
            <person name="Salzberg S.L."/>
            <person name="Smith H.O."/>
            <person name="Venter J.C."/>
            <person name="Fraser C.M."/>
        </authorList>
    </citation>
    <scope>NUCLEOTIDE SEQUENCE [LARGE SCALE GENOMIC DNA]</scope>
    <source>
        <strain>ATCC 43589 / DSM 3109 / JCM 10099 / NBRC 100826 / MSB8</strain>
    </source>
</reference>
<reference evidence="7 9" key="2">
    <citation type="journal article" date="2006" name="Proc. Natl. Acad. Sci. U.S.A.">
        <title>Structure of FliM provides insight into assembly of the switch complex in the bacterial flagella motor.</title>
        <authorList>
            <person name="Park S.Y."/>
            <person name="Lowder B."/>
            <person name="Bilwes A.M."/>
            <person name="Blair D.F."/>
            <person name="Crane B.R."/>
        </authorList>
    </citation>
    <scope>X-RAY CRYSTALLOGRAPHY (2.00 ANGSTROMS) OF 44-226</scope>
    <scope>INTERACTION WITH CHEY</scope>
    <scope>MUTAGENESIS OF GLU-60</scope>
</reference>
<reference evidence="7 10" key="3">
    <citation type="journal article" date="2011" name="EMBO J.">
        <title>Architecture of the flagellar rotor.</title>
        <authorList>
            <person name="Paul K."/>
            <person name="Gonzalez-Bonet G."/>
            <person name="Bilwes A.M."/>
            <person name="Crane B.R."/>
            <person name="Blair D."/>
        </authorList>
    </citation>
    <scope>X-RAY CRYSTALLOGRAPHY (3.50 ANGSTROMS) OF 46-233 IN COMPLEX WITH FLIG</scope>
    <scope>INTERACTION WITH FLIG</scope>
</reference>
<reference evidence="7 11" key="4">
    <citation type="journal article" date="2012" name="J. Biol. Chem.">
        <title>Structure of flagellar motor proteins in complex allows for insights into motor structure and switching.</title>
        <authorList>
            <person name="Vartanian A.S."/>
            <person name="Paz A."/>
            <person name="Fortgang E.A."/>
            <person name="Abramson J."/>
            <person name="Dahlquist F.W."/>
        </authorList>
    </citation>
    <scope>X-RAY CRYSTALLOGRAPHY (1.93 ANGSTROMS) OF 46-230 IN COMPLEX WITH FLIG</scope>
    <scope>INTERACTION WITH FLIG</scope>
</reference>
<evidence type="ECO:0000250" key="1"/>
<evidence type="ECO:0000250" key="2">
    <source>
        <dbReference type="UniProtKB" id="P06974"/>
    </source>
</evidence>
<evidence type="ECO:0000255" key="3"/>
<evidence type="ECO:0000269" key="4">
    <source>
    </source>
</evidence>
<evidence type="ECO:0000269" key="5">
    <source>
    </source>
</evidence>
<evidence type="ECO:0000269" key="6">
    <source>
    </source>
</evidence>
<evidence type="ECO:0000305" key="7"/>
<evidence type="ECO:0000312" key="8">
    <source>
        <dbReference type="EMBL" id="AAD35762.1"/>
    </source>
</evidence>
<evidence type="ECO:0000312" key="9">
    <source>
        <dbReference type="PDB" id="2HP7"/>
    </source>
</evidence>
<evidence type="ECO:0000312" key="10">
    <source>
        <dbReference type="PDB" id="3SOH"/>
    </source>
</evidence>
<evidence type="ECO:0000312" key="11">
    <source>
        <dbReference type="PDB" id="4FHR"/>
    </source>
</evidence>
<evidence type="ECO:0007829" key="12">
    <source>
        <dbReference type="PDB" id="3SOH"/>
    </source>
</evidence>
<evidence type="ECO:0007829" key="13">
    <source>
        <dbReference type="PDB" id="4FHR"/>
    </source>
</evidence>
<evidence type="ECO:0007829" key="14">
    <source>
        <dbReference type="PDB" id="4IGA"/>
    </source>
</evidence>
<protein>
    <recommendedName>
        <fullName evidence="8">Flagellar motor switch protein FliM</fullName>
    </recommendedName>
</protein>
<sequence length="328" mass="37888">MSDVLSQEEINQLIEALMKGELKEEDLLKEEEEKKVKPYDFKRPSKFSKEQLRTFQMIHENFGRALSTYLSGRLRTFVDVEISIDQLTYEEFIRSVMIPSFIVIFTGDVFEGSAIFEMRLDLFYTMLDIIMGGPGENPPNRPPTEIETSIMRKEVTNMLTLLAQAWSDFQYFIPSIENVETNPQFVQIVPPNEIVLLVTASVSWGEFTSFINVCWPFSLLEPLLEKLSDRFWMMGRKPEKVEERMEELRKASQKIPVTVQAVIGETELRLKEILDLEVGDVIRLGTHYKDEIRIDVEGRPKFRGIPGVFKGKYAVKVTGEFTNGGEYE</sequence>